<dbReference type="EC" id="2.5.1.61" evidence="1"/>
<dbReference type="EMBL" id="AE014075">
    <property type="protein sequence ID" value="AAN83157.1"/>
    <property type="status" value="ALT_INIT"/>
    <property type="molecule type" value="Genomic_DNA"/>
</dbReference>
<dbReference type="RefSeq" id="WP_001350351.1">
    <property type="nucleotide sequence ID" value="NZ_CP051263.1"/>
</dbReference>
<dbReference type="SMR" id="Q8FBP1"/>
<dbReference type="STRING" id="199310.c4724"/>
<dbReference type="KEGG" id="ecc:c4724"/>
<dbReference type="eggNOG" id="COG0181">
    <property type="taxonomic scope" value="Bacteria"/>
</dbReference>
<dbReference type="HOGENOM" id="CLU_019704_0_2_6"/>
<dbReference type="UniPathway" id="UPA00251">
    <property type="reaction ID" value="UER00319"/>
</dbReference>
<dbReference type="Proteomes" id="UP000001410">
    <property type="component" value="Chromosome"/>
</dbReference>
<dbReference type="GO" id="GO:0005737">
    <property type="term" value="C:cytoplasm"/>
    <property type="evidence" value="ECO:0007669"/>
    <property type="project" value="TreeGrafter"/>
</dbReference>
<dbReference type="GO" id="GO:0004418">
    <property type="term" value="F:hydroxymethylbilane synthase activity"/>
    <property type="evidence" value="ECO:0007669"/>
    <property type="project" value="UniProtKB-UniRule"/>
</dbReference>
<dbReference type="GO" id="GO:0006782">
    <property type="term" value="P:protoporphyrinogen IX biosynthetic process"/>
    <property type="evidence" value="ECO:0007669"/>
    <property type="project" value="UniProtKB-UniRule"/>
</dbReference>
<dbReference type="CDD" id="cd13646">
    <property type="entry name" value="PBP2_EcHMBS_like"/>
    <property type="match status" value="1"/>
</dbReference>
<dbReference type="FunFam" id="3.30.160.40:FF:000002">
    <property type="entry name" value="Porphobilinogen deaminase"/>
    <property type="match status" value="1"/>
</dbReference>
<dbReference type="FunFam" id="3.40.190.10:FF:000004">
    <property type="entry name" value="Porphobilinogen deaminase"/>
    <property type="match status" value="1"/>
</dbReference>
<dbReference type="FunFam" id="3.40.190.10:FF:000005">
    <property type="entry name" value="Porphobilinogen deaminase"/>
    <property type="match status" value="1"/>
</dbReference>
<dbReference type="Gene3D" id="3.40.190.10">
    <property type="entry name" value="Periplasmic binding protein-like II"/>
    <property type="match status" value="2"/>
</dbReference>
<dbReference type="Gene3D" id="3.30.160.40">
    <property type="entry name" value="Porphobilinogen deaminase, C-terminal domain"/>
    <property type="match status" value="1"/>
</dbReference>
<dbReference type="HAMAP" id="MF_00260">
    <property type="entry name" value="Porphobil_deam"/>
    <property type="match status" value="1"/>
</dbReference>
<dbReference type="InterPro" id="IPR000860">
    <property type="entry name" value="HemC"/>
</dbReference>
<dbReference type="InterPro" id="IPR022419">
    <property type="entry name" value="Porphobilin_deaminase_cofac_BS"/>
</dbReference>
<dbReference type="InterPro" id="IPR022417">
    <property type="entry name" value="Porphobilin_deaminase_N"/>
</dbReference>
<dbReference type="InterPro" id="IPR022418">
    <property type="entry name" value="Porphobilinogen_deaminase_C"/>
</dbReference>
<dbReference type="InterPro" id="IPR036803">
    <property type="entry name" value="Porphobilinogen_deaminase_C_sf"/>
</dbReference>
<dbReference type="NCBIfam" id="TIGR00212">
    <property type="entry name" value="hemC"/>
    <property type="match status" value="1"/>
</dbReference>
<dbReference type="PANTHER" id="PTHR11557">
    <property type="entry name" value="PORPHOBILINOGEN DEAMINASE"/>
    <property type="match status" value="1"/>
</dbReference>
<dbReference type="PANTHER" id="PTHR11557:SF0">
    <property type="entry name" value="PORPHOBILINOGEN DEAMINASE"/>
    <property type="match status" value="1"/>
</dbReference>
<dbReference type="Pfam" id="PF01379">
    <property type="entry name" value="Porphobil_deam"/>
    <property type="match status" value="1"/>
</dbReference>
<dbReference type="Pfam" id="PF03900">
    <property type="entry name" value="Porphobil_deamC"/>
    <property type="match status" value="1"/>
</dbReference>
<dbReference type="PIRSF" id="PIRSF001438">
    <property type="entry name" value="4pyrrol_synth_OHMeBilane_synth"/>
    <property type="match status" value="1"/>
</dbReference>
<dbReference type="PRINTS" id="PR00151">
    <property type="entry name" value="PORPHBDMNASE"/>
</dbReference>
<dbReference type="SUPFAM" id="SSF53850">
    <property type="entry name" value="Periplasmic binding protein-like II"/>
    <property type="match status" value="1"/>
</dbReference>
<dbReference type="SUPFAM" id="SSF54782">
    <property type="entry name" value="Porphobilinogen deaminase (hydroxymethylbilane synthase), C-terminal domain"/>
    <property type="match status" value="1"/>
</dbReference>
<dbReference type="PROSITE" id="PS00533">
    <property type="entry name" value="PORPHOBILINOGEN_DEAM"/>
    <property type="match status" value="1"/>
</dbReference>
<accession>Q8FBP1</accession>
<sequence>MLDNVLRIATRQSPLALWQAHYVKDKLMASHPGLVVELVPMVTRGDVILDTPLAKVGGKGLFVKELEVALLENRADIAVHSMKDVPVEFPQGLGLVTICEREDPRDAFVSNTYDSLDALPAGSIVGTSSLRRQCQLAERRPDLIIRSLRGNVGTRLSKLDNGEYDAIILAVAGLKRLGLESRIRAALPPEISLPAVGQGAVGIECRLDDARTRELLAALNHHETALRVTAERAMNTRLEGGCQVPIGSYAELIDGEIWLRALVGAPDGSQIIRGERRGAPQDAEQMGISLAEELLNNGAREILAEVYNGDAPA</sequence>
<evidence type="ECO:0000255" key="1">
    <source>
        <dbReference type="HAMAP-Rule" id="MF_00260"/>
    </source>
</evidence>
<evidence type="ECO:0000305" key="2"/>
<comment type="function">
    <text evidence="1">Tetrapolymerization of the monopyrrole PBG into the hydroxymethylbilane pre-uroporphyrinogen in several discrete steps.</text>
</comment>
<comment type="catalytic activity">
    <reaction evidence="1">
        <text>4 porphobilinogen + H2O = hydroxymethylbilane + 4 NH4(+)</text>
        <dbReference type="Rhea" id="RHEA:13185"/>
        <dbReference type="ChEBI" id="CHEBI:15377"/>
        <dbReference type="ChEBI" id="CHEBI:28938"/>
        <dbReference type="ChEBI" id="CHEBI:57845"/>
        <dbReference type="ChEBI" id="CHEBI:58126"/>
        <dbReference type="EC" id="2.5.1.61"/>
    </reaction>
</comment>
<comment type="cofactor">
    <cofactor evidence="1">
        <name>dipyrromethane</name>
        <dbReference type="ChEBI" id="CHEBI:60342"/>
    </cofactor>
    <text evidence="1">Binds 1 dipyrromethane group covalently.</text>
</comment>
<comment type="pathway">
    <text evidence="1">Porphyrin-containing compound metabolism; protoporphyrin-IX biosynthesis; coproporphyrinogen-III from 5-aminolevulinate: step 2/4.</text>
</comment>
<comment type="subunit">
    <text evidence="1">Monomer.</text>
</comment>
<comment type="miscellaneous">
    <text evidence="1">The porphobilinogen subunits are added to the dipyrromethane group.</text>
</comment>
<comment type="similarity">
    <text evidence="1">Belongs to the HMBS family.</text>
</comment>
<comment type="sequence caution" evidence="2">
    <conflict type="erroneous initiation">
        <sequence resource="EMBL-CDS" id="AAN83157"/>
    </conflict>
</comment>
<protein>
    <recommendedName>
        <fullName evidence="1">Porphobilinogen deaminase</fullName>
        <shortName evidence="1">PBG</shortName>
        <ecNumber evidence="1">2.5.1.61</ecNumber>
    </recommendedName>
    <alternativeName>
        <fullName evidence="1">Hydroxymethylbilane synthase</fullName>
        <shortName evidence="1">HMBS</shortName>
    </alternativeName>
    <alternativeName>
        <fullName evidence="1">Pre-uroporphyrinogen synthase</fullName>
    </alternativeName>
</protein>
<feature type="chain" id="PRO_0000142935" description="Porphobilinogen deaminase">
    <location>
        <begin position="1"/>
        <end position="313"/>
    </location>
</feature>
<feature type="modified residue" description="S-(dipyrrolylmethanemethyl)cysteine" evidence="1">
    <location>
        <position position="242"/>
    </location>
</feature>
<gene>
    <name evidence="1" type="primary">hemC</name>
    <name type="ordered locus">c4724</name>
</gene>
<keyword id="KW-0627">Porphyrin biosynthesis</keyword>
<keyword id="KW-1185">Reference proteome</keyword>
<keyword id="KW-0808">Transferase</keyword>
<name>HEM3_ECOL6</name>
<organism>
    <name type="scientific">Escherichia coli O6:H1 (strain CFT073 / ATCC 700928 / UPEC)</name>
    <dbReference type="NCBI Taxonomy" id="199310"/>
    <lineage>
        <taxon>Bacteria</taxon>
        <taxon>Pseudomonadati</taxon>
        <taxon>Pseudomonadota</taxon>
        <taxon>Gammaproteobacteria</taxon>
        <taxon>Enterobacterales</taxon>
        <taxon>Enterobacteriaceae</taxon>
        <taxon>Escherichia</taxon>
    </lineage>
</organism>
<reference key="1">
    <citation type="journal article" date="2002" name="Proc. Natl. Acad. Sci. U.S.A.">
        <title>Extensive mosaic structure revealed by the complete genome sequence of uropathogenic Escherichia coli.</title>
        <authorList>
            <person name="Welch R.A."/>
            <person name="Burland V."/>
            <person name="Plunkett G. III"/>
            <person name="Redford P."/>
            <person name="Roesch P."/>
            <person name="Rasko D."/>
            <person name="Buckles E.L."/>
            <person name="Liou S.-R."/>
            <person name="Boutin A."/>
            <person name="Hackett J."/>
            <person name="Stroud D."/>
            <person name="Mayhew G.F."/>
            <person name="Rose D.J."/>
            <person name="Zhou S."/>
            <person name="Schwartz D.C."/>
            <person name="Perna N.T."/>
            <person name="Mobley H.L.T."/>
            <person name="Donnenberg M.S."/>
            <person name="Blattner F.R."/>
        </authorList>
    </citation>
    <scope>NUCLEOTIDE SEQUENCE [LARGE SCALE GENOMIC DNA]</scope>
    <source>
        <strain>CFT073 / ATCC 700928 / UPEC</strain>
    </source>
</reference>
<proteinExistence type="inferred from homology"/>